<feature type="chain" id="PRO_0000105169" description="Glutamyl-tRNA(Gln) amidotransferase subunit A">
    <location>
        <begin position="1"/>
        <end position="487"/>
    </location>
</feature>
<feature type="active site" description="Charge relay system" evidence="1">
    <location>
        <position position="77"/>
    </location>
</feature>
<feature type="active site" description="Charge relay system" evidence="1">
    <location>
        <position position="152"/>
    </location>
</feature>
<feature type="active site" description="Acyl-ester intermediate" evidence="1">
    <location>
        <position position="176"/>
    </location>
</feature>
<dbReference type="EC" id="6.3.5.7" evidence="1"/>
<dbReference type="EMBL" id="AL935263">
    <property type="protein sequence ID" value="CCC78538.1"/>
    <property type="molecule type" value="Genomic_DNA"/>
</dbReference>
<dbReference type="RefSeq" id="WP_011101268.1">
    <property type="nucleotide sequence ID" value="NC_004567.2"/>
</dbReference>
<dbReference type="RefSeq" id="YP_004889052.1">
    <property type="nucleotide sequence ID" value="NC_004567.2"/>
</dbReference>
<dbReference type="SMR" id="Q88XP7"/>
<dbReference type="STRING" id="220668.lp_1148"/>
<dbReference type="EnsemblBacteria" id="CCC78538">
    <property type="protein sequence ID" value="CCC78538"/>
    <property type="gene ID" value="lp_1148"/>
</dbReference>
<dbReference type="KEGG" id="lpl:lp_1148"/>
<dbReference type="PATRIC" id="fig|220668.9.peg.969"/>
<dbReference type="eggNOG" id="COG0154">
    <property type="taxonomic scope" value="Bacteria"/>
</dbReference>
<dbReference type="HOGENOM" id="CLU_009600_0_3_9"/>
<dbReference type="OrthoDB" id="9811471at2"/>
<dbReference type="PhylomeDB" id="Q88XP7"/>
<dbReference type="Proteomes" id="UP000000432">
    <property type="component" value="Chromosome"/>
</dbReference>
<dbReference type="GO" id="GO:0030956">
    <property type="term" value="C:glutamyl-tRNA(Gln) amidotransferase complex"/>
    <property type="evidence" value="ECO:0007669"/>
    <property type="project" value="InterPro"/>
</dbReference>
<dbReference type="GO" id="GO:0005524">
    <property type="term" value="F:ATP binding"/>
    <property type="evidence" value="ECO:0007669"/>
    <property type="project" value="UniProtKB-KW"/>
</dbReference>
<dbReference type="GO" id="GO:0050567">
    <property type="term" value="F:glutaminyl-tRNA synthase (glutamine-hydrolyzing) activity"/>
    <property type="evidence" value="ECO:0007669"/>
    <property type="project" value="UniProtKB-UniRule"/>
</dbReference>
<dbReference type="GO" id="GO:0006412">
    <property type="term" value="P:translation"/>
    <property type="evidence" value="ECO:0007669"/>
    <property type="project" value="UniProtKB-UniRule"/>
</dbReference>
<dbReference type="Gene3D" id="3.90.1300.10">
    <property type="entry name" value="Amidase signature (AS) domain"/>
    <property type="match status" value="1"/>
</dbReference>
<dbReference type="HAMAP" id="MF_00120">
    <property type="entry name" value="GatA"/>
    <property type="match status" value="1"/>
</dbReference>
<dbReference type="InterPro" id="IPR000120">
    <property type="entry name" value="Amidase"/>
</dbReference>
<dbReference type="InterPro" id="IPR020556">
    <property type="entry name" value="Amidase_CS"/>
</dbReference>
<dbReference type="InterPro" id="IPR023631">
    <property type="entry name" value="Amidase_dom"/>
</dbReference>
<dbReference type="InterPro" id="IPR036928">
    <property type="entry name" value="AS_sf"/>
</dbReference>
<dbReference type="InterPro" id="IPR004412">
    <property type="entry name" value="GatA"/>
</dbReference>
<dbReference type="NCBIfam" id="TIGR00132">
    <property type="entry name" value="gatA"/>
    <property type="match status" value="1"/>
</dbReference>
<dbReference type="PANTHER" id="PTHR11895:SF151">
    <property type="entry name" value="GLUTAMYL-TRNA(GLN) AMIDOTRANSFERASE SUBUNIT A"/>
    <property type="match status" value="1"/>
</dbReference>
<dbReference type="PANTHER" id="PTHR11895">
    <property type="entry name" value="TRANSAMIDASE"/>
    <property type="match status" value="1"/>
</dbReference>
<dbReference type="Pfam" id="PF01425">
    <property type="entry name" value="Amidase"/>
    <property type="match status" value="1"/>
</dbReference>
<dbReference type="SUPFAM" id="SSF75304">
    <property type="entry name" value="Amidase signature (AS) enzymes"/>
    <property type="match status" value="1"/>
</dbReference>
<dbReference type="PROSITE" id="PS00571">
    <property type="entry name" value="AMIDASES"/>
    <property type="match status" value="1"/>
</dbReference>
<name>GATA_LACPL</name>
<evidence type="ECO:0000255" key="1">
    <source>
        <dbReference type="HAMAP-Rule" id="MF_00120"/>
    </source>
</evidence>
<comment type="function">
    <text evidence="1">Allows the formation of correctly charged Gln-tRNA(Gln) through the transamidation of misacylated Glu-tRNA(Gln) in organisms which lack glutaminyl-tRNA synthetase. The reaction takes place in the presence of glutamine and ATP through an activated gamma-phospho-Glu-tRNA(Gln).</text>
</comment>
<comment type="catalytic activity">
    <reaction evidence="1">
        <text>L-glutamyl-tRNA(Gln) + L-glutamine + ATP + H2O = L-glutaminyl-tRNA(Gln) + L-glutamate + ADP + phosphate + H(+)</text>
        <dbReference type="Rhea" id="RHEA:17521"/>
        <dbReference type="Rhea" id="RHEA-COMP:9681"/>
        <dbReference type="Rhea" id="RHEA-COMP:9684"/>
        <dbReference type="ChEBI" id="CHEBI:15377"/>
        <dbReference type="ChEBI" id="CHEBI:15378"/>
        <dbReference type="ChEBI" id="CHEBI:29985"/>
        <dbReference type="ChEBI" id="CHEBI:30616"/>
        <dbReference type="ChEBI" id="CHEBI:43474"/>
        <dbReference type="ChEBI" id="CHEBI:58359"/>
        <dbReference type="ChEBI" id="CHEBI:78520"/>
        <dbReference type="ChEBI" id="CHEBI:78521"/>
        <dbReference type="ChEBI" id="CHEBI:456216"/>
        <dbReference type="EC" id="6.3.5.7"/>
    </reaction>
</comment>
<comment type="subunit">
    <text evidence="1">Heterotrimer of A, B and C subunits.</text>
</comment>
<comment type="similarity">
    <text evidence="1">Belongs to the amidase family. GatA subfamily.</text>
</comment>
<protein>
    <recommendedName>
        <fullName evidence="1">Glutamyl-tRNA(Gln) amidotransferase subunit A</fullName>
        <shortName evidence="1">Glu-ADT subunit A</shortName>
        <ecNumber evidence="1">6.3.5.7</ecNumber>
    </recommendedName>
</protein>
<gene>
    <name evidence="1" type="primary">gatA</name>
    <name type="ordered locus">lp_1148</name>
</gene>
<reference key="1">
    <citation type="journal article" date="2003" name="Proc. Natl. Acad. Sci. U.S.A.">
        <title>Complete genome sequence of Lactobacillus plantarum WCFS1.</title>
        <authorList>
            <person name="Kleerebezem M."/>
            <person name="Boekhorst J."/>
            <person name="van Kranenburg R."/>
            <person name="Molenaar D."/>
            <person name="Kuipers O.P."/>
            <person name="Leer R."/>
            <person name="Tarchini R."/>
            <person name="Peters S.A."/>
            <person name="Sandbrink H.M."/>
            <person name="Fiers M.W.E.J."/>
            <person name="Stiekema W."/>
            <person name="Klein Lankhorst R.M."/>
            <person name="Bron P.A."/>
            <person name="Hoffer S.M."/>
            <person name="Nierop Groot M.N."/>
            <person name="Kerkhoven R."/>
            <person name="De Vries M."/>
            <person name="Ursing B."/>
            <person name="De Vos W.M."/>
            <person name="Siezen R.J."/>
        </authorList>
    </citation>
    <scope>NUCLEOTIDE SEQUENCE [LARGE SCALE GENOMIC DNA]</scope>
    <source>
        <strain>ATCC BAA-793 / NCIMB 8826 / WCFS1</strain>
    </source>
</reference>
<reference key="2">
    <citation type="journal article" date="2012" name="J. Bacteriol.">
        <title>Complete resequencing and reannotation of the Lactobacillus plantarum WCFS1 genome.</title>
        <authorList>
            <person name="Siezen R.J."/>
            <person name="Francke C."/>
            <person name="Renckens B."/>
            <person name="Boekhorst J."/>
            <person name="Wels M."/>
            <person name="Kleerebezem M."/>
            <person name="van Hijum S.A."/>
        </authorList>
    </citation>
    <scope>NUCLEOTIDE SEQUENCE [LARGE SCALE GENOMIC DNA]</scope>
    <scope>GENOME REANNOTATION</scope>
    <source>
        <strain>ATCC BAA-793 / NCIMB 8826 / WCFS1</strain>
    </source>
</reference>
<proteinExistence type="inferred from homology"/>
<sequence length="487" mass="52089">MTYFDQDLTSLHADLVAKKISATELAKATFANMNQVDPKLGAFLNLNEEQALQQAAALDQDGIDANNVFAGIPMAVKDNIVTKGLTTTAASKMLENFVPVYNATVVDKLLASNALIVGKTNMDEFAMGGSTETSAFHVTRNPWDISRVPGGSSGGSAVAVASGQVPVALGSDTGGSIRQPSSFNGIVGMKPTYGRVSRWGLIAFGSSLDQIGPMTRTVKDNAAALNMIAGNDVHDTTSSKQTVPDFTAGLTGDIKGMKIGLPKEYMGDGIDPKVREVIQQAVKQFEDLGATVEEVSLPNSRYGVAAYYIIASSEASSNLQRFDGIRYGFRADDVKNLEDVYVRSRSEGFGDEVKRRIMLGTFSLSAGYYDAYFHKAGQVRTMIINDFNKVFEDYDLIMGPVAPTPAFKLGDELSDPITMYMNDVLTIPVNLAGLPGMSVPAGFADGLPVGLQLIGKAFDESTMYRAGYAFEQATQVYKQTPKVGGAN</sequence>
<accession>Q88XP7</accession>
<accession>F9UMU9</accession>
<organism>
    <name type="scientific">Lactiplantibacillus plantarum (strain ATCC BAA-793 / NCIMB 8826 / WCFS1)</name>
    <name type="common">Lactobacillus plantarum</name>
    <dbReference type="NCBI Taxonomy" id="220668"/>
    <lineage>
        <taxon>Bacteria</taxon>
        <taxon>Bacillati</taxon>
        <taxon>Bacillota</taxon>
        <taxon>Bacilli</taxon>
        <taxon>Lactobacillales</taxon>
        <taxon>Lactobacillaceae</taxon>
        <taxon>Lactiplantibacillus</taxon>
    </lineage>
</organism>
<keyword id="KW-0067">ATP-binding</keyword>
<keyword id="KW-0436">Ligase</keyword>
<keyword id="KW-0547">Nucleotide-binding</keyword>
<keyword id="KW-0648">Protein biosynthesis</keyword>
<keyword id="KW-1185">Reference proteome</keyword>